<organism>
    <name type="scientific">Shewanella violacea (strain JCM 10179 / CIP 106290 / LMG 19151 / DSS12)</name>
    <dbReference type="NCBI Taxonomy" id="637905"/>
    <lineage>
        <taxon>Bacteria</taxon>
        <taxon>Pseudomonadati</taxon>
        <taxon>Pseudomonadota</taxon>
        <taxon>Gammaproteobacteria</taxon>
        <taxon>Alteromonadales</taxon>
        <taxon>Shewanellaceae</taxon>
        <taxon>Shewanella</taxon>
    </lineage>
</organism>
<protein>
    <recommendedName>
        <fullName>Transcriptional regulator MraZ</fullName>
    </recommendedName>
</protein>
<gene>
    <name evidence="1" type="primary">mraZ</name>
    <name type="ordered locus">SVI_4042</name>
</gene>
<keyword id="KW-0963">Cytoplasm</keyword>
<keyword id="KW-0238">DNA-binding</keyword>
<keyword id="KW-1185">Reference proteome</keyword>
<keyword id="KW-0677">Repeat</keyword>
<keyword id="KW-0804">Transcription</keyword>
<keyword id="KW-0805">Transcription regulation</keyword>
<reference key="1">
    <citation type="journal article" date="2002" name="J. Biochem.">
        <title>Isolation and characterization of the dcw cluster from the piezophilic deep-sea bacterium Shewanella violacea.</title>
        <authorList>
            <person name="Ishii A."/>
            <person name="Nakasone K."/>
            <person name="Sato T."/>
            <person name="Wachi M."/>
            <person name="Sugai M."/>
            <person name="Nagai K."/>
            <person name="Kato C."/>
        </authorList>
    </citation>
    <scope>NUCLEOTIDE SEQUENCE [GENOMIC DNA]</scope>
</reference>
<reference key="2">
    <citation type="journal article" date="2010" name="Mol. Biosyst.">
        <title>Complete genome sequence and comparative analysis of Shewanella violacea, a psychrophilic and piezophilic bacterium from deep sea floor sediments.</title>
        <authorList>
            <person name="Aono E."/>
            <person name="Baba T."/>
            <person name="Ara T."/>
            <person name="Nishi T."/>
            <person name="Nakamichi T."/>
            <person name="Inamoto E."/>
            <person name="Toyonaga H."/>
            <person name="Hasegawa M."/>
            <person name="Takai Y."/>
            <person name="Okumura Y."/>
            <person name="Baba M."/>
            <person name="Tomita M."/>
            <person name="Kato C."/>
            <person name="Oshima T."/>
            <person name="Nakasone K."/>
            <person name="Mori H."/>
        </authorList>
    </citation>
    <scope>NUCLEOTIDE SEQUENCE [LARGE SCALE GENOMIC DNA]</scope>
    <source>
        <strain>JCM 10179 / CIP 106290 / LMG 19151 / DSS12</strain>
    </source>
</reference>
<sequence>MFRGASAINLDTKGRIAIPKRYREPLRAEYNGQLVITVDFQSSCLLLYPLDEWSKIEAKLLLLSDTRASERAMKRLLLGYAHECELDGNGRLLLPPPLRQYANLEKHAMLVGQLNKFELWDEAAWQQQIEQSRETIRSEEFASNERLADFSL</sequence>
<name>MRAZ_SHEVD</name>
<accession>Q9F1N9</accession>
<accession>D4ZDV2</accession>
<comment type="subunit">
    <text evidence="1">Forms oligomers.</text>
</comment>
<comment type="subcellular location">
    <subcellularLocation>
        <location evidence="1">Cytoplasm</location>
        <location evidence="1">Nucleoid</location>
    </subcellularLocation>
</comment>
<comment type="similarity">
    <text evidence="1">Belongs to the MraZ family.</text>
</comment>
<dbReference type="EMBL" id="AB052554">
    <property type="protein sequence ID" value="BAB19193.1"/>
    <property type="molecule type" value="Genomic_DNA"/>
</dbReference>
<dbReference type="EMBL" id="AP011177">
    <property type="protein sequence ID" value="BAJ04013.1"/>
    <property type="molecule type" value="Genomic_DNA"/>
</dbReference>
<dbReference type="RefSeq" id="WP_013053304.1">
    <property type="nucleotide sequence ID" value="NC_014012.1"/>
</dbReference>
<dbReference type="SMR" id="Q9F1N9"/>
<dbReference type="STRING" id="637905.SVI_4042"/>
<dbReference type="KEGG" id="svo:SVI_4042"/>
<dbReference type="eggNOG" id="COG2001">
    <property type="taxonomic scope" value="Bacteria"/>
</dbReference>
<dbReference type="HOGENOM" id="CLU_107907_2_0_6"/>
<dbReference type="OrthoDB" id="9807753at2"/>
<dbReference type="Proteomes" id="UP000002350">
    <property type="component" value="Chromosome"/>
</dbReference>
<dbReference type="GO" id="GO:0005737">
    <property type="term" value="C:cytoplasm"/>
    <property type="evidence" value="ECO:0007669"/>
    <property type="project" value="UniProtKB-UniRule"/>
</dbReference>
<dbReference type="GO" id="GO:0009295">
    <property type="term" value="C:nucleoid"/>
    <property type="evidence" value="ECO:0007669"/>
    <property type="project" value="UniProtKB-SubCell"/>
</dbReference>
<dbReference type="GO" id="GO:0003700">
    <property type="term" value="F:DNA-binding transcription factor activity"/>
    <property type="evidence" value="ECO:0007669"/>
    <property type="project" value="UniProtKB-UniRule"/>
</dbReference>
<dbReference type="GO" id="GO:0000976">
    <property type="term" value="F:transcription cis-regulatory region binding"/>
    <property type="evidence" value="ECO:0007669"/>
    <property type="project" value="TreeGrafter"/>
</dbReference>
<dbReference type="GO" id="GO:2000143">
    <property type="term" value="P:negative regulation of DNA-templated transcription initiation"/>
    <property type="evidence" value="ECO:0007669"/>
    <property type="project" value="TreeGrafter"/>
</dbReference>
<dbReference type="CDD" id="cd16321">
    <property type="entry name" value="MraZ_C"/>
    <property type="match status" value="1"/>
</dbReference>
<dbReference type="CDD" id="cd16320">
    <property type="entry name" value="MraZ_N"/>
    <property type="match status" value="1"/>
</dbReference>
<dbReference type="FunFam" id="3.40.1550.20:FF:000001">
    <property type="entry name" value="Transcriptional regulator MraZ"/>
    <property type="match status" value="1"/>
</dbReference>
<dbReference type="Gene3D" id="3.40.1550.20">
    <property type="entry name" value="Transcriptional regulator MraZ domain"/>
    <property type="match status" value="1"/>
</dbReference>
<dbReference type="HAMAP" id="MF_01008">
    <property type="entry name" value="MraZ"/>
    <property type="match status" value="1"/>
</dbReference>
<dbReference type="InterPro" id="IPR003444">
    <property type="entry name" value="MraZ"/>
</dbReference>
<dbReference type="InterPro" id="IPR035644">
    <property type="entry name" value="MraZ_C"/>
</dbReference>
<dbReference type="InterPro" id="IPR020603">
    <property type="entry name" value="MraZ_dom"/>
</dbReference>
<dbReference type="InterPro" id="IPR035642">
    <property type="entry name" value="MraZ_N"/>
</dbReference>
<dbReference type="InterPro" id="IPR038619">
    <property type="entry name" value="MraZ_sf"/>
</dbReference>
<dbReference type="InterPro" id="IPR007159">
    <property type="entry name" value="SpoVT-AbrB_dom"/>
</dbReference>
<dbReference type="InterPro" id="IPR037914">
    <property type="entry name" value="SpoVT-AbrB_sf"/>
</dbReference>
<dbReference type="NCBIfam" id="TIGR00242">
    <property type="entry name" value="division/cell wall cluster transcriptional repressor MraZ"/>
    <property type="match status" value="1"/>
</dbReference>
<dbReference type="PANTHER" id="PTHR34701">
    <property type="entry name" value="TRANSCRIPTIONAL REGULATOR MRAZ"/>
    <property type="match status" value="1"/>
</dbReference>
<dbReference type="PANTHER" id="PTHR34701:SF1">
    <property type="entry name" value="TRANSCRIPTIONAL REGULATOR MRAZ"/>
    <property type="match status" value="1"/>
</dbReference>
<dbReference type="Pfam" id="PF02381">
    <property type="entry name" value="MraZ"/>
    <property type="match status" value="2"/>
</dbReference>
<dbReference type="SUPFAM" id="SSF89447">
    <property type="entry name" value="AbrB/MazE/MraZ-like"/>
    <property type="match status" value="1"/>
</dbReference>
<dbReference type="PROSITE" id="PS51740">
    <property type="entry name" value="SPOVT_ABRB"/>
    <property type="match status" value="2"/>
</dbReference>
<proteinExistence type="inferred from homology"/>
<evidence type="ECO:0000255" key="1">
    <source>
        <dbReference type="HAMAP-Rule" id="MF_01008"/>
    </source>
</evidence>
<evidence type="ECO:0000255" key="2">
    <source>
        <dbReference type="PROSITE-ProRule" id="PRU01076"/>
    </source>
</evidence>
<feature type="chain" id="PRO_0000108534" description="Transcriptional regulator MraZ">
    <location>
        <begin position="1"/>
        <end position="152"/>
    </location>
</feature>
<feature type="domain" description="SpoVT-AbrB 1" evidence="2">
    <location>
        <begin position="5"/>
        <end position="52"/>
    </location>
</feature>
<feature type="domain" description="SpoVT-AbrB 2" evidence="2">
    <location>
        <begin position="81"/>
        <end position="124"/>
    </location>
</feature>